<keyword id="KW-0963">Cytoplasm</keyword>
<keyword id="KW-0396">Initiation factor</keyword>
<keyword id="KW-0648">Protein biosynthesis</keyword>
<organism>
    <name type="scientific">Bordetella parapertussis (strain 12822 / ATCC BAA-587 / NCTC 13253)</name>
    <dbReference type="NCBI Taxonomy" id="257311"/>
    <lineage>
        <taxon>Bacteria</taxon>
        <taxon>Pseudomonadati</taxon>
        <taxon>Pseudomonadota</taxon>
        <taxon>Betaproteobacteria</taxon>
        <taxon>Burkholderiales</taxon>
        <taxon>Alcaligenaceae</taxon>
        <taxon>Bordetella</taxon>
    </lineage>
</organism>
<sequence>MRLIGLDGEQLGIVKIADAFRLSEQSDVDLVEIAPNADPPVCRLMDYGKFKYQEQKRQAEARSKQKVIQVKEVKFRPATDEGDYQVKLRNLRRFLEEGDKAKVTLRFRGREMAHQELGMRVLERVRDDLIELAQVEAMPKLEGRQMVMVLAPRKKAVGKPDAAG</sequence>
<dbReference type="EMBL" id="BX640429">
    <property type="protein sequence ID" value="CAE37263.1"/>
    <property type="molecule type" value="Genomic_DNA"/>
</dbReference>
<dbReference type="SMR" id="Q7W911"/>
<dbReference type="KEGG" id="bpa:BPP1964"/>
<dbReference type="HOGENOM" id="CLU_054919_3_2_4"/>
<dbReference type="Proteomes" id="UP000001421">
    <property type="component" value="Chromosome"/>
</dbReference>
<dbReference type="GO" id="GO:0005829">
    <property type="term" value="C:cytosol"/>
    <property type="evidence" value="ECO:0007669"/>
    <property type="project" value="TreeGrafter"/>
</dbReference>
<dbReference type="GO" id="GO:0016020">
    <property type="term" value="C:membrane"/>
    <property type="evidence" value="ECO:0007669"/>
    <property type="project" value="TreeGrafter"/>
</dbReference>
<dbReference type="GO" id="GO:0043022">
    <property type="term" value="F:ribosome binding"/>
    <property type="evidence" value="ECO:0007669"/>
    <property type="project" value="TreeGrafter"/>
</dbReference>
<dbReference type="GO" id="GO:0003743">
    <property type="term" value="F:translation initiation factor activity"/>
    <property type="evidence" value="ECO:0007669"/>
    <property type="project" value="UniProtKB-UniRule"/>
</dbReference>
<dbReference type="GO" id="GO:0032790">
    <property type="term" value="P:ribosome disassembly"/>
    <property type="evidence" value="ECO:0007669"/>
    <property type="project" value="TreeGrafter"/>
</dbReference>
<dbReference type="FunFam" id="3.30.110.10:FF:000001">
    <property type="entry name" value="Translation initiation factor IF-3"/>
    <property type="match status" value="1"/>
</dbReference>
<dbReference type="Gene3D" id="3.30.110.10">
    <property type="entry name" value="Translation initiation factor 3 (IF-3), C-terminal domain"/>
    <property type="match status" value="1"/>
</dbReference>
<dbReference type="Gene3D" id="3.10.20.80">
    <property type="entry name" value="Translation initiation factor 3 (IF-3), N-terminal domain"/>
    <property type="match status" value="1"/>
</dbReference>
<dbReference type="HAMAP" id="MF_00080">
    <property type="entry name" value="IF_3"/>
    <property type="match status" value="1"/>
</dbReference>
<dbReference type="InterPro" id="IPR036788">
    <property type="entry name" value="T_IF-3_C_sf"/>
</dbReference>
<dbReference type="InterPro" id="IPR036787">
    <property type="entry name" value="T_IF-3_N_sf"/>
</dbReference>
<dbReference type="InterPro" id="IPR019813">
    <property type="entry name" value="Translation_initiation_fac3_CS"/>
</dbReference>
<dbReference type="InterPro" id="IPR001288">
    <property type="entry name" value="Translation_initiation_fac_3"/>
</dbReference>
<dbReference type="InterPro" id="IPR019815">
    <property type="entry name" value="Translation_initiation_fac_3_C"/>
</dbReference>
<dbReference type="InterPro" id="IPR019814">
    <property type="entry name" value="Translation_initiation_fac_3_N"/>
</dbReference>
<dbReference type="NCBIfam" id="TIGR00168">
    <property type="entry name" value="infC"/>
    <property type="match status" value="1"/>
</dbReference>
<dbReference type="PANTHER" id="PTHR10938">
    <property type="entry name" value="TRANSLATION INITIATION FACTOR IF-3"/>
    <property type="match status" value="1"/>
</dbReference>
<dbReference type="PANTHER" id="PTHR10938:SF0">
    <property type="entry name" value="TRANSLATION INITIATION FACTOR IF-3, MITOCHONDRIAL"/>
    <property type="match status" value="1"/>
</dbReference>
<dbReference type="Pfam" id="PF00707">
    <property type="entry name" value="IF3_C"/>
    <property type="match status" value="1"/>
</dbReference>
<dbReference type="Pfam" id="PF05198">
    <property type="entry name" value="IF3_N"/>
    <property type="match status" value="1"/>
</dbReference>
<dbReference type="SUPFAM" id="SSF55200">
    <property type="entry name" value="Translation initiation factor IF3, C-terminal domain"/>
    <property type="match status" value="1"/>
</dbReference>
<dbReference type="SUPFAM" id="SSF54364">
    <property type="entry name" value="Translation initiation factor IF3, N-terminal domain"/>
    <property type="match status" value="1"/>
</dbReference>
<dbReference type="PROSITE" id="PS00938">
    <property type="entry name" value="IF3"/>
    <property type="match status" value="1"/>
</dbReference>
<proteinExistence type="inferred from homology"/>
<feature type="chain" id="PRO_0000177489" description="Translation initiation factor IF-3">
    <location>
        <begin position="1"/>
        <end position="164"/>
    </location>
</feature>
<comment type="function">
    <text evidence="1">IF-3 binds to the 30S ribosomal subunit and shifts the equilibrium between 70S ribosomes and their 50S and 30S subunits in favor of the free subunits, thus enhancing the availability of 30S subunits on which protein synthesis initiation begins.</text>
</comment>
<comment type="subunit">
    <text evidence="1">Monomer.</text>
</comment>
<comment type="subcellular location">
    <subcellularLocation>
        <location evidence="1">Cytoplasm</location>
    </subcellularLocation>
</comment>
<comment type="similarity">
    <text evidence="1">Belongs to the IF-3 family.</text>
</comment>
<reference key="1">
    <citation type="journal article" date="2003" name="Nat. Genet.">
        <title>Comparative analysis of the genome sequences of Bordetella pertussis, Bordetella parapertussis and Bordetella bronchiseptica.</title>
        <authorList>
            <person name="Parkhill J."/>
            <person name="Sebaihia M."/>
            <person name="Preston A."/>
            <person name="Murphy L.D."/>
            <person name="Thomson N.R."/>
            <person name="Harris D.E."/>
            <person name="Holden M.T.G."/>
            <person name="Churcher C.M."/>
            <person name="Bentley S.D."/>
            <person name="Mungall K.L."/>
            <person name="Cerdeno-Tarraga A.-M."/>
            <person name="Temple L."/>
            <person name="James K.D."/>
            <person name="Harris B."/>
            <person name="Quail M.A."/>
            <person name="Achtman M."/>
            <person name="Atkin R."/>
            <person name="Baker S."/>
            <person name="Basham D."/>
            <person name="Bason N."/>
            <person name="Cherevach I."/>
            <person name="Chillingworth T."/>
            <person name="Collins M."/>
            <person name="Cronin A."/>
            <person name="Davis P."/>
            <person name="Doggett J."/>
            <person name="Feltwell T."/>
            <person name="Goble A."/>
            <person name="Hamlin N."/>
            <person name="Hauser H."/>
            <person name="Holroyd S."/>
            <person name="Jagels K."/>
            <person name="Leather S."/>
            <person name="Moule S."/>
            <person name="Norberczak H."/>
            <person name="O'Neil S."/>
            <person name="Ormond D."/>
            <person name="Price C."/>
            <person name="Rabbinowitsch E."/>
            <person name="Rutter S."/>
            <person name="Sanders M."/>
            <person name="Saunders D."/>
            <person name="Seeger K."/>
            <person name="Sharp S."/>
            <person name="Simmonds M."/>
            <person name="Skelton J."/>
            <person name="Squares R."/>
            <person name="Squares S."/>
            <person name="Stevens K."/>
            <person name="Unwin L."/>
            <person name="Whitehead S."/>
            <person name="Barrell B.G."/>
            <person name="Maskell D.J."/>
        </authorList>
    </citation>
    <scope>NUCLEOTIDE SEQUENCE [LARGE SCALE GENOMIC DNA]</scope>
    <source>
        <strain>12822 / ATCC BAA-587 / NCTC 13253</strain>
    </source>
</reference>
<gene>
    <name evidence="1" type="primary">infC</name>
    <name type="ordered locus">BPP1964</name>
</gene>
<protein>
    <recommendedName>
        <fullName evidence="1">Translation initiation factor IF-3</fullName>
    </recommendedName>
</protein>
<name>IF3_BORPA</name>
<evidence type="ECO:0000255" key="1">
    <source>
        <dbReference type="HAMAP-Rule" id="MF_00080"/>
    </source>
</evidence>
<accession>Q7W911</accession>